<proteinExistence type="evidence at protein level"/>
<gene>
    <name type="primary">cqsS</name>
    <name type="ordered locus">VC_A0522</name>
</gene>
<reference key="1">
    <citation type="journal article" date="2000" name="Nature">
        <title>DNA sequence of both chromosomes of the cholera pathogen Vibrio cholerae.</title>
        <authorList>
            <person name="Heidelberg J.F."/>
            <person name="Eisen J.A."/>
            <person name="Nelson W.C."/>
            <person name="Clayton R.A."/>
            <person name="Gwinn M.L."/>
            <person name="Dodson R.J."/>
            <person name="Haft D.H."/>
            <person name="Hickey E.K."/>
            <person name="Peterson J.D."/>
            <person name="Umayam L.A."/>
            <person name="Gill S.R."/>
            <person name="Nelson K.E."/>
            <person name="Read T.D."/>
            <person name="Tettelin H."/>
            <person name="Richardson D.L."/>
            <person name="Ermolaeva M.D."/>
            <person name="Vamathevan J.J."/>
            <person name="Bass S."/>
            <person name="Qin H."/>
            <person name="Dragoi I."/>
            <person name="Sellers P."/>
            <person name="McDonald L.A."/>
            <person name="Utterback T.R."/>
            <person name="Fleischmann R.D."/>
            <person name="Nierman W.C."/>
            <person name="White O."/>
            <person name="Salzberg S.L."/>
            <person name="Smith H.O."/>
            <person name="Colwell R.R."/>
            <person name="Mekalanos J.J."/>
            <person name="Venter J.C."/>
            <person name="Fraser C.M."/>
        </authorList>
    </citation>
    <scope>NUCLEOTIDE SEQUENCE [LARGE SCALE GENOMIC DNA]</scope>
    <source>
        <strain>ATCC 39315 / El Tor Inaba N16961</strain>
    </source>
</reference>
<reference key="2">
    <citation type="journal article" date="2002" name="Cell">
        <title>Parallel quorum sensing systems converge to regulate virulence in Vibrio cholerae.</title>
        <authorList>
            <person name="Miller M.B."/>
            <person name="Skorupski K."/>
            <person name="Lenz D.H."/>
            <person name="Taylor R.K."/>
            <person name="Bassler B.L."/>
        </authorList>
    </citation>
    <scope>FUNCTION AS THE CAI-1 SENSOR</scope>
</reference>
<reference key="3">
    <citation type="journal article" date="2007" name="Nature">
        <title>The major Vibrio cholerae autoinducer and its role in virulence factor production.</title>
        <authorList>
            <person name="Higgins D.A."/>
            <person name="Pomianek M.E."/>
            <person name="Kraml C.M."/>
            <person name="Taylor R.K."/>
            <person name="Semmelhack M.F."/>
            <person name="Bassler B.L."/>
        </authorList>
    </citation>
    <scope>IDENTIFICATION OF CAI-1</scope>
</reference>
<dbReference type="EC" id="2.7.13.3"/>
<dbReference type="EC" id="3.1.3.-"/>
<dbReference type="EMBL" id="AE003853">
    <property type="protein sequence ID" value="AAF96425.1"/>
    <property type="molecule type" value="Genomic_DNA"/>
</dbReference>
<dbReference type="PIR" id="G82448">
    <property type="entry name" value="G82448"/>
</dbReference>
<dbReference type="RefSeq" id="NP_232913.1">
    <property type="nucleotide sequence ID" value="NC_002506.1"/>
</dbReference>
<dbReference type="RefSeq" id="WP_001882375.1">
    <property type="nucleotide sequence ID" value="NZ_LT906615.1"/>
</dbReference>
<dbReference type="SMR" id="Q9KM66"/>
<dbReference type="STRING" id="243277.VC_A0522"/>
<dbReference type="BindingDB" id="Q9KM66"/>
<dbReference type="ChEMBL" id="CHEMBL1921662"/>
<dbReference type="DNASU" id="2612235"/>
<dbReference type="EnsemblBacteria" id="AAF96425">
    <property type="protein sequence ID" value="AAF96425"/>
    <property type="gene ID" value="VC_A0522"/>
</dbReference>
<dbReference type="KEGG" id="vch:VC_A0522"/>
<dbReference type="PATRIC" id="fig|243277.26.peg.3148"/>
<dbReference type="eggNOG" id="COG0784">
    <property type="taxonomic scope" value="Bacteria"/>
</dbReference>
<dbReference type="eggNOG" id="COG2205">
    <property type="taxonomic scope" value="Bacteria"/>
</dbReference>
<dbReference type="HOGENOM" id="CLU_000445_104_18_6"/>
<dbReference type="PHI-base" id="PHI:10037"/>
<dbReference type="PRO" id="PR:Q9KM66"/>
<dbReference type="Proteomes" id="UP000000584">
    <property type="component" value="Chromosome 2"/>
</dbReference>
<dbReference type="GO" id="GO:0005886">
    <property type="term" value="C:plasma membrane"/>
    <property type="evidence" value="ECO:0007669"/>
    <property type="project" value="UniProtKB-SubCell"/>
</dbReference>
<dbReference type="GO" id="GO:0005524">
    <property type="term" value="F:ATP binding"/>
    <property type="evidence" value="ECO:0007669"/>
    <property type="project" value="UniProtKB-KW"/>
</dbReference>
<dbReference type="GO" id="GO:0004721">
    <property type="term" value="F:phosphoprotein phosphatase activity"/>
    <property type="evidence" value="ECO:0007669"/>
    <property type="project" value="UniProtKB-KW"/>
</dbReference>
<dbReference type="GO" id="GO:0000155">
    <property type="term" value="F:phosphorelay sensor kinase activity"/>
    <property type="evidence" value="ECO:0000318"/>
    <property type="project" value="GO_Central"/>
</dbReference>
<dbReference type="CDD" id="cd00082">
    <property type="entry name" value="HisKA"/>
    <property type="match status" value="1"/>
</dbReference>
<dbReference type="CDD" id="cd17546">
    <property type="entry name" value="REC_hyHK_CKI1_RcsC-like"/>
    <property type="match status" value="1"/>
</dbReference>
<dbReference type="FunFam" id="1.10.287.130:FF:000173">
    <property type="entry name" value="Sensor histidine kinase/response regulator LuxN"/>
    <property type="match status" value="1"/>
</dbReference>
<dbReference type="Gene3D" id="1.10.287.130">
    <property type="match status" value="1"/>
</dbReference>
<dbReference type="Gene3D" id="3.40.50.2300">
    <property type="match status" value="1"/>
</dbReference>
<dbReference type="Gene3D" id="3.30.565.10">
    <property type="entry name" value="Histidine kinase-like ATPase, C-terminal domain"/>
    <property type="match status" value="1"/>
</dbReference>
<dbReference type="InterPro" id="IPR011006">
    <property type="entry name" value="CheY-like_superfamily"/>
</dbReference>
<dbReference type="InterPro" id="IPR036890">
    <property type="entry name" value="HATPase_C_sf"/>
</dbReference>
<dbReference type="InterPro" id="IPR005467">
    <property type="entry name" value="His_kinase_dom"/>
</dbReference>
<dbReference type="InterPro" id="IPR003661">
    <property type="entry name" value="HisK_dim/P_dom"/>
</dbReference>
<dbReference type="InterPro" id="IPR036097">
    <property type="entry name" value="HisK_dim/P_sf"/>
</dbReference>
<dbReference type="InterPro" id="IPR004358">
    <property type="entry name" value="Sig_transdc_His_kin-like_C"/>
</dbReference>
<dbReference type="InterPro" id="IPR001789">
    <property type="entry name" value="Sig_transdc_resp-reg_receiver"/>
</dbReference>
<dbReference type="PANTHER" id="PTHR43547:SF2">
    <property type="entry name" value="HYBRID SIGNAL TRANSDUCTION HISTIDINE KINASE C"/>
    <property type="match status" value="1"/>
</dbReference>
<dbReference type="PANTHER" id="PTHR43547">
    <property type="entry name" value="TWO-COMPONENT HISTIDINE KINASE"/>
    <property type="match status" value="1"/>
</dbReference>
<dbReference type="Pfam" id="PF02518">
    <property type="entry name" value="HATPase_c"/>
    <property type="match status" value="1"/>
</dbReference>
<dbReference type="Pfam" id="PF00072">
    <property type="entry name" value="Response_reg"/>
    <property type="match status" value="1"/>
</dbReference>
<dbReference type="PRINTS" id="PR00344">
    <property type="entry name" value="BCTRLSENSOR"/>
</dbReference>
<dbReference type="SMART" id="SM00387">
    <property type="entry name" value="HATPase_c"/>
    <property type="match status" value="1"/>
</dbReference>
<dbReference type="SMART" id="SM00448">
    <property type="entry name" value="REC"/>
    <property type="match status" value="1"/>
</dbReference>
<dbReference type="SUPFAM" id="SSF55874">
    <property type="entry name" value="ATPase domain of HSP90 chaperone/DNA topoisomerase II/histidine kinase"/>
    <property type="match status" value="1"/>
</dbReference>
<dbReference type="SUPFAM" id="SSF52172">
    <property type="entry name" value="CheY-like"/>
    <property type="match status" value="1"/>
</dbReference>
<dbReference type="SUPFAM" id="SSF47384">
    <property type="entry name" value="Homodimeric domain of signal transducing histidine kinase"/>
    <property type="match status" value="1"/>
</dbReference>
<dbReference type="PROSITE" id="PS50109">
    <property type="entry name" value="HIS_KIN"/>
    <property type="match status" value="1"/>
</dbReference>
<dbReference type="PROSITE" id="PS50110">
    <property type="entry name" value="RESPONSE_REGULATORY"/>
    <property type="match status" value="1"/>
</dbReference>
<evidence type="ECO:0000255" key="1"/>
<evidence type="ECO:0000255" key="2">
    <source>
        <dbReference type="PROSITE-ProRule" id="PRU00107"/>
    </source>
</evidence>
<evidence type="ECO:0000255" key="3">
    <source>
        <dbReference type="PROSITE-ProRule" id="PRU00169"/>
    </source>
</evidence>
<evidence type="ECO:0000269" key="4">
    <source>
    </source>
</evidence>
<evidence type="ECO:0000305" key="5"/>
<accession>Q9KM66</accession>
<keyword id="KW-0067">ATP-binding</keyword>
<keyword id="KW-1003">Cell membrane</keyword>
<keyword id="KW-0378">Hydrolase</keyword>
<keyword id="KW-0418">Kinase</keyword>
<keyword id="KW-0472">Membrane</keyword>
<keyword id="KW-0547">Nucleotide-binding</keyword>
<keyword id="KW-0597">Phosphoprotein</keyword>
<keyword id="KW-0904">Protein phosphatase</keyword>
<keyword id="KW-1185">Reference proteome</keyword>
<keyword id="KW-0808">Transferase</keyword>
<keyword id="KW-0812">Transmembrane</keyword>
<keyword id="KW-1133">Transmembrane helix</keyword>
<feature type="chain" id="PRO_0000316891" description="CAI-1 autoinducer sensor kinase/phosphatase CqsS">
    <location>
        <begin position="1"/>
        <end position="686"/>
    </location>
</feature>
<feature type="transmembrane region" description="Helical" evidence="1">
    <location>
        <begin position="21"/>
        <end position="41"/>
    </location>
</feature>
<feature type="transmembrane region" description="Helical" evidence="1">
    <location>
        <begin position="47"/>
        <end position="64"/>
    </location>
</feature>
<feature type="transmembrane region" description="Helical" evidence="1">
    <location>
        <begin position="77"/>
        <end position="97"/>
    </location>
</feature>
<feature type="transmembrane region" description="Helical" evidence="1">
    <location>
        <begin position="100"/>
        <end position="120"/>
    </location>
</feature>
<feature type="transmembrane region" description="Helical" evidence="1">
    <location>
        <begin position="124"/>
        <end position="144"/>
    </location>
</feature>
<feature type="transmembrane region" description="Helical" evidence="1">
    <location>
        <begin position="152"/>
        <end position="172"/>
    </location>
</feature>
<feature type="domain" description="Histidine kinase" evidence="2">
    <location>
        <begin position="191"/>
        <end position="416"/>
    </location>
</feature>
<feature type="domain" description="Response regulatory" evidence="3">
    <location>
        <begin position="569"/>
        <end position="686"/>
    </location>
</feature>
<feature type="modified residue" description="Phosphohistidine; by autocatalysis" evidence="2">
    <location>
        <position position="194"/>
    </location>
</feature>
<feature type="modified residue" description="4-aspartylphosphate" evidence="3">
    <location>
        <position position="618"/>
    </location>
</feature>
<protein>
    <recommendedName>
        <fullName>CAI-1 autoinducer sensor kinase/phosphatase CqsS</fullName>
        <ecNumber>2.7.13.3</ecNumber>
        <ecNumber>3.1.3.-</ecNumber>
    </recommendedName>
    <alternativeName>
        <fullName>Cholerae quorum-sensing sensor</fullName>
    </alternativeName>
</protein>
<sequence>MIVSMDVIKRVYQYAEPNLSLVGWMGMLGFPAYYFIWEYWFPQSYENLGLRCAAAVLFGGLVFRDSMPKKWQRYMPGYFLFTIGFCLPFFFAFMMLMNDWSTIWAMSFMASIFLHILLVHDTRVMALQALFSVLVAYLAVYGLTDFHPTTLIEWQYIPIFLFTYVFGNLCFFRNQISHETKVSIAKTFGAGIAHEMRNPLSALKTSIDVVRTMIPKPQTAAHTDYSLDAQELDLLHQILNEADDVIYSGNNAIDLLLTSIDENRVSPASFKKHSVVDVIEKAVKTFPYKNAADQHSVELEVHQPFDFFGSDTLLTYALFNLLKNAFYYQKEHFSVCISIEQTSEHNLIRVRDNGVGIAPEMLEDIFRDFYTFGKNGSYGLGLPFCRKVMSAFGGTIRCASQQGQWTEFVLSFPRYDSDTVNEIKTELLKTKSLIYIGSNQAIVRELNQLAVEDEFGFTAISAQQAVRRQDYEFEFDLILLDLDDATAQGELLPKLEGTLSFAEGCIGYVYDPGKTYAVNINRYLRIQPISIHSILRKPRKIIERLLFEQESLSMNRNVIPLQKSRHERRILVVDDNQSIRTFTAILLEQQGYEVVQANDGSEVLKHMESQNIDLVLMDIEMPNVGGLEATRLIRNSEHEYKNIPIIGYTGDNSPKTLALVQTSGMNDFIVKPADRDVLLNKVAAWV</sequence>
<comment type="function">
    <text evidence="4">Senses the quorum-sensing autoinducer CAI-1 ((S)-3-hydroxytridecan-4-one) which probably functions as an intragenus signal. The sensory signal is then relayed to LuxU and LuxO.</text>
</comment>
<comment type="catalytic activity">
    <reaction>
        <text>ATP + protein L-histidine = ADP + protein N-phospho-L-histidine.</text>
        <dbReference type="EC" id="2.7.13.3"/>
    </reaction>
</comment>
<comment type="subcellular location">
    <subcellularLocation>
        <location evidence="5">Cell membrane</location>
        <topology evidence="5">Multi-pass membrane protein</topology>
    </subcellularLocation>
</comment>
<name>CQSS_VIBCH</name>
<organism>
    <name type="scientific">Vibrio cholerae serotype O1 (strain ATCC 39315 / El Tor Inaba N16961)</name>
    <dbReference type="NCBI Taxonomy" id="243277"/>
    <lineage>
        <taxon>Bacteria</taxon>
        <taxon>Pseudomonadati</taxon>
        <taxon>Pseudomonadota</taxon>
        <taxon>Gammaproteobacteria</taxon>
        <taxon>Vibrionales</taxon>
        <taxon>Vibrionaceae</taxon>
        <taxon>Vibrio</taxon>
    </lineage>
</organism>